<keyword id="KW-0027">Amidation</keyword>
<keyword id="KW-0903">Direct protein sequencing</keyword>
<keyword id="KW-0527">Neuropeptide</keyword>
<keyword id="KW-0964">Secreted</keyword>
<name>DFAM1_LYMST</name>
<feature type="peptide" id="PRO_0000043902" description="Lymna-DF-amide 1">
    <location>
        <begin position="1"/>
        <end position="13"/>
    </location>
</feature>
<feature type="modified residue" description="Phenylalanine amide" evidence="1">
    <location>
        <position position="13"/>
    </location>
</feature>
<proteinExistence type="evidence at protein level"/>
<organism>
    <name type="scientific">Lymnaea stagnalis</name>
    <name type="common">Great pond snail</name>
    <name type="synonym">Helix stagnalis</name>
    <dbReference type="NCBI Taxonomy" id="6523"/>
    <lineage>
        <taxon>Eukaryota</taxon>
        <taxon>Metazoa</taxon>
        <taxon>Spiralia</taxon>
        <taxon>Lophotrochozoa</taxon>
        <taxon>Mollusca</taxon>
        <taxon>Gastropoda</taxon>
        <taxon>Heterobranchia</taxon>
        <taxon>Euthyneura</taxon>
        <taxon>Panpulmonata</taxon>
        <taxon>Hygrophila</taxon>
        <taxon>Lymnaeoidea</taxon>
        <taxon>Lymnaeidae</taxon>
        <taxon>Lymnaea</taxon>
    </lineage>
</organism>
<evidence type="ECO:0000269" key="1">
    <source>
    </source>
</evidence>
<sequence length="13" mass="1519">PYDRISNSAFSDF</sequence>
<comment type="subcellular location">
    <subcellularLocation>
        <location>Secreted</location>
    </subcellularLocation>
</comment>
<reference key="1">
    <citation type="journal article" date="1993" name="Eur. J. Biochem.">
        <title>LymnaDFamides, a new family of neuropeptides from the pond snail, Lymnaea stagnalis. Clue to cholecystokinin immunoreactivity in invertebrates?</title>
        <authorList>
            <person name="Johnsen A.H."/>
            <person name="Rehfeld J.F."/>
        </authorList>
    </citation>
    <scope>PROTEIN SEQUENCE</scope>
    <scope>AMIDATION AT PHE-13</scope>
    <source>
        <tissue>Ganglion</tissue>
    </source>
</reference>
<accession>P80178</accession>
<dbReference type="PIR" id="S32471">
    <property type="entry name" value="S32471"/>
</dbReference>
<dbReference type="GO" id="GO:0005576">
    <property type="term" value="C:extracellular region"/>
    <property type="evidence" value="ECO:0007669"/>
    <property type="project" value="UniProtKB-SubCell"/>
</dbReference>
<dbReference type="GO" id="GO:0007218">
    <property type="term" value="P:neuropeptide signaling pathway"/>
    <property type="evidence" value="ECO:0007669"/>
    <property type="project" value="UniProtKB-KW"/>
</dbReference>
<protein>
    <recommendedName>
        <fullName>Lymna-DF-amide 1</fullName>
    </recommendedName>
</protein>